<sequence length="342" mass="39600">MKAGIELISHSQASHATYANSMTLAEKGPQRLKRQFKEHSSSKESNVSRWLKIFIRQFDIWFPETIPTMKVRYELLRKNFIKEIFNSRAFIYPFLGFYEVLTNPVYWKHILLFAVCYALIFVTIAGLFYVTLVPLLVTWAILLLGPLGVILVHIQWILQTNVLTAFVCRTLVLTHITNQIFDISLVLQDQDEFLNEVKVLPKPQKPHRKIDEPDAVRNFNTIKGSRIFKIPRLLFRMFFKVSNFTSLTLLSLIPIVGPILANQLMAPKRTFTYLQRYFLLKGFSKKQAKDFQYEHYASFICFGMSAGLLELIPFFTIVTISSNTVGAAKWCTSLLKGERKKE</sequence>
<dbReference type="EMBL" id="Z74790">
    <property type="protein sequence ID" value="CAA99053.1"/>
    <property type="status" value="ALT_SEQ"/>
    <property type="molecule type" value="Genomic_DNA"/>
</dbReference>
<dbReference type="EMBL" id="AY245791">
    <property type="protein sequence ID" value="AAP04341.1"/>
    <property type="molecule type" value="mRNA"/>
</dbReference>
<dbReference type="EMBL" id="BK006948">
    <property type="protein sequence ID" value="DAA10735.1"/>
    <property type="molecule type" value="Genomic_DNA"/>
</dbReference>
<dbReference type="PIR" id="S66733">
    <property type="entry name" value="S66733"/>
</dbReference>
<dbReference type="RefSeq" id="NP_014594.2">
    <property type="nucleotide sequence ID" value="NM_001183302.1"/>
</dbReference>
<dbReference type="BioGRID" id="34355">
    <property type="interactions" value="43"/>
</dbReference>
<dbReference type="DIP" id="DIP-49894N"/>
<dbReference type="FunCoup" id="Q08219">
    <property type="interactions" value="64"/>
</dbReference>
<dbReference type="IntAct" id="Q08219">
    <property type="interactions" value="1"/>
</dbReference>
<dbReference type="STRING" id="4932.YOL048C"/>
<dbReference type="TCDB" id="2.A.121.2.2">
    <property type="family name" value="the sulfate transporter (cysz) family"/>
</dbReference>
<dbReference type="PaxDb" id="4932-YOL048C"/>
<dbReference type="PeptideAtlas" id="Q08219"/>
<dbReference type="EnsemblFungi" id="YOL048C_mRNA">
    <property type="protein sequence ID" value="YOL048C"/>
    <property type="gene ID" value="YOL048C"/>
</dbReference>
<dbReference type="GeneID" id="854109"/>
<dbReference type="KEGG" id="sce:YOL048C"/>
<dbReference type="AGR" id="SGD:S000005408"/>
<dbReference type="SGD" id="S000005408">
    <property type="gene designation" value="RRT8"/>
</dbReference>
<dbReference type="VEuPathDB" id="FungiDB:YOL048C"/>
<dbReference type="eggNOG" id="ENOG502QVX4">
    <property type="taxonomic scope" value="Eukaryota"/>
</dbReference>
<dbReference type="HOGENOM" id="CLU_062645_2_0_1"/>
<dbReference type="InParanoid" id="Q08219"/>
<dbReference type="OMA" id="REFWPLF"/>
<dbReference type="OrthoDB" id="10012223at2759"/>
<dbReference type="BioCyc" id="YEAST:G3O-33461-MONOMER"/>
<dbReference type="BioGRID-ORCS" id="854109">
    <property type="hits" value="3 hits in 10 CRISPR screens"/>
</dbReference>
<dbReference type="PRO" id="PR:Q08219"/>
<dbReference type="Proteomes" id="UP000002311">
    <property type="component" value="Chromosome XV"/>
</dbReference>
<dbReference type="RNAct" id="Q08219">
    <property type="molecule type" value="protein"/>
</dbReference>
<dbReference type="GO" id="GO:0005619">
    <property type="term" value="C:ascospore wall"/>
    <property type="evidence" value="ECO:0000314"/>
    <property type="project" value="SGD"/>
</dbReference>
<dbReference type="GO" id="GO:0005811">
    <property type="term" value="C:lipid droplet"/>
    <property type="evidence" value="ECO:0007005"/>
    <property type="project" value="SGD"/>
</dbReference>
<dbReference type="GO" id="GO:0005628">
    <property type="term" value="C:prospore membrane"/>
    <property type="evidence" value="ECO:0000314"/>
    <property type="project" value="SGD"/>
</dbReference>
<dbReference type="GO" id="GO:0030476">
    <property type="term" value="P:ascospore wall assembly"/>
    <property type="evidence" value="ECO:0000315"/>
    <property type="project" value="SGD"/>
</dbReference>
<dbReference type="InterPro" id="IPR052786">
    <property type="entry name" value="Spore_wall_assembly"/>
</dbReference>
<dbReference type="PANTHER" id="PTHR34292">
    <property type="entry name" value="OUTER SPORE WALL PROTEIN LDS1"/>
    <property type="match status" value="1"/>
</dbReference>
<dbReference type="PANTHER" id="PTHR34292:SF3">
    <property type="entry name" value="OUTER SPORE WALL PROTEIN LDS2-RELATED"/>
    <property type="match status" value="1"/>
</dbReference>
<comment type="function">
    <text evidence="4 5">Involved in spore wall assembly (PubMed:23966878). May be involved in the modulation of rDNA transcription (PubMed:19270272).</text>
</comment>
<comment type="subcellular location">
    <subcellularLocation>
        <location evidence="5">Prospore membrane</location>
        <topology evidence="1">Multi-pass membrane protein</topology>
    </subcellularLocation>
    <subcellularLocation>
        <location evidence="2">Lipid droplet</location>
    </subcellularLocation>
    <subcellularLocation>
        <location evidence="5">Spore wall</location>
    </subcellularLocation>
    <text evidence="5">Localizes to the ascal side of growing prospore membranes in mid-meiosis II and to the spore wall in post-meiotic cells. Localizes to a specific subset of lipid droplets associated with the exterior surface of the spore throughout spore wall formation.</text>
</comment>
<comment type="disruption phenotype">
    <text evidence="5">A combined deletion of the LDS proteins RRT8, LDS1 and LDS2 fails to incorporate dityrosine and another yet uncharacterized component in the outer spore wall.</text>
</comment>
<comment type="similarity">
    <text evidence="7">Belongs to the LDS family.</text>
</comment>
<comment type="sequence caution" evidence="7">
    <conflict type="erroneous gene model prediction">
        <sequence resource="EMBL-CDS" id="CAA99053"/>
    </conflict>
</comment>
<evidence type="ECO:0000255" key="1"/>
<evidence type="ECO:0000269" key="2">
    <source>
    </source>
</evidence>
<evidence type="ECO:0000269" key="3">
    <source>
    </source>
</evidence>
<evidence type="ECO:0000269" key="4">
    <source>
    </source>
</evidence>
<evidence type="ECO:0000269" key="5">
    <source>
    </source>
</evidence>
<evidence type="ECO:0000303" key="6">
    <source>
    </source>
</evidence>
<evidence type="ECO:0000305" key="7"/>
<evidence type="ECO:0000305" key="8">
    <source>
    </source>
</evidence>
<evidence type="ECO:0000305" key="9">
    <source>
    </source>
</evidence>
<evidence type="ECO:0000312" key="10">
    <source>
        <dbReference type="SGD" id="S000005408"/>
    </source>
</evidence>
<gene>
    <name evidence="6" type="primary">RRT8</name>
    <name evidence="10" type="ordered locus">YOL048C</name>
</gene>
<name>RRT8_YEAST</name>
<proteinExistence type="evidence at protein level"/>
<organism>
    <name type="scientific">Saccharomyces cerevisiae (strain ATCC 204508 / S288c)</name>
    <name type="common">Baker's yeast</name>
    <dbReference type="NCBI Taxonomy" id="559292"/>
    <lineage>
        <taxon>Eukaryota</taxon>
        <taxon>Fungi</taxon>
        <taxon>Dikarya</taxon>
        <taxon>Ascomycota</taxon>
        <taxon>Saccharomycotina</taxon>
        <taxon>Saccharomycetes</taxon>
        <taxon>Saccharomycetales</taxon>
        <taxon>Saccharomycetaceae</taxon>
        <taxon>Saccharomyces</taxon>
    </lineage>
</organism>
<accession>Q08219</accession>
<accession>D6W219</accession>
<accession>Q870H5</accession>
<keyword id="KW-0551">Lipid droplet</keyword>
<keyword id="KW-0472">Membrane</keyword>
<keyword id="KW-1185">Reference proteome</keyword>
<keyword id="KW-0749">Sporulation</keyword>
<keyword id="KW-0812">Transmembrane</keyword>
<keyword id="KW-1133">Transmembrane helix</keyword>
<protein>
    <recommendedName>
        <fullName evidence="9">Outer spore wall protein RRT8</fullName>
    </recommendedName>
    <alternativeName>
        <fullName evidence="6">Regulator of rDNA transcription protein 8</fullName>
    </alternativeName>
</protein>
<reference key="1">
    <citation type="journal article" date="1997" name="Nature">
        <title>The nucleotide sequence of Saccharomyces cerevisiae chromosome XV.</title>
        <authorList>
            <person name="Dujon B."/>
            <person name="Albermann K."/>
            <person name="Aldea M."/>
            <person name="Alexandraki D."/>
            <person name="Ansorge W."/>
            <person name="Arino J."/>
            <person name="Benes V."/>
            <person name="Bohn C."/>
            <person name="Bolotin-Fukuhara M."/>
            <person name="Bordonne R."/>
            <person name="Boyer J."/>
            <person name="Camasses A."/>
            <person name="Casamayor A."/>
            <person name="Casas C."/>
            <person name="Cheret G."/>
            <person name="Cziepluch C."/>
            <person name="Daignan-Fornier B."/>
            <person name="Dang V.-D."/>
            <person name="de Haan M."/>
            <person name="Delius H."/>
            <person name="Durand P."/>
            <person name="Fairhead C."/>
            <person name="Feldmann H."/>
            <person name="Gaillon L."/>
            <person name="Galisson F."/>
            <person name="Gamo F.-J."/>
            <person name="Gancedo C."/>
            <person name="Goffeau A."/>
            <person name="Goulding S.E."/>
            <person name="Grivell L.A."/>
            <person name="Habbig B."/>
            <person name="Hand N.J."/>
            <person name="Hani J."/>
            <person name="Hattenhorst U."/>
            <person name="Hebling U."/>
            <person name="Hernando Y."/>
            <person name="Herrero E."/>
            <person name="Heumann K."/>
            <person name="Hiesel R."/>
            <person name="Hilger F."/>
            <person name="Hofmann B."/>
            <person name="Hollenberg C.P."/>
            <person name="Hughes B."/>
            <person name="Jauniaux J.-C."/>
            <person name="Kalogeropoulos A."/>
            <person name="Katsoulou C."/>
            <person name="Kordes E."/>
            <person name="Lafuente M.J."/>
            <person name="Landt O."/>
            <person name="Louis E.J."/>
            <person name="Maarse A.C."/>
            <person name="Madania A."/>
            <person name="Mannhaupt G."/>
            <person name="Marck C."/>
            <person name="Martin R.P."/>
            <person name="Mewes H.-W."/>
            <person name="Michaux G."/>
            <person name="Paces V."/>
            <person name="Parle-McDermott A.G."/>
            <person name="Pearson B.M."/>
            <person name="Perrin A."/>
            <person name="Pettersson B."/>
            <person name="Poch O."/>
            <person name="Pohl T.M."/>
            <person name="Poirey R."/>
            <person name="Portetelle D."/>
            <person name="Pujol A."/>
            <person name="Purnelle B."/>
            <person name="Ramezani Rad M."/>
            <person name="Rechmann S."/>
            <person name="Schwager C."/>
            <person name="Schweizer M."/>
            <person name="Sor F."/>
            <person name="Sterky F."/>
            <person name="Tarassov I.A."/>
            <person name="Teodoru C."/>
            <person name="Tettelin H."/>
            <person name="Thierry A."/>
            <person name="Tobiasch E."/>
            <person name="Tzermia M."/>
            <person name="Uhlen M."/>
            <person name="Unseld M."/>
            <person name="Valens M."/>
            <person name="Vandenbol M."/>
            <person name="Vetter I."/>
            <person name="Vlcek C."/>
            <person name="Voet M."/>
            <person name="Volckaert G."/>
            <person name="Voss H."/>
            <person name="Wambutt R."/>
            <person name="Wedler H."/>
            <person name="Wiemann S."/>
            <person name="Winsor B."/>
            <person name="Wolfe K.H."/>
            <person name="Zollner A."/>
            <person name="Zumstein E."/>
            <person name="Kleine K."/>
        </authorList>
    </citation>
    <scope>NUCLEOTIDE SEQUENCE [LARGE SCALE GENOMIC DNA]</scope>
    <source>
        <strain>ATCC 204508 / S288c</strain>
    </source>
</reference>
<reference key="2">
    <citation type="journal article" date="2014" name="G3 (Bethesda)">
        <title>The reference genome sequence of Saccharomyces cerevisiae: Then and now.</title>
        <authorList>
            <person name="Engel S.R."/>
            <person name="Dietrich F.S."/>
            <person name="Fisk D.G."/>
            <person name="Binkley G."/>
            <person name="Balakrishnan R."/>
            <person name="Costanzo M.C."/>
            <person name="Dwight S.S."/>
            <person name="Hitz B.C."/>
            <person name="Karra K."/>
            <person name="Nash R.S."/>
            <person name="Weng S."/>
            <person name="Wong E.D."/>
            <person name="Lloyd P."/>
            <person name="Skrzypek M.S."/>
            <person name="Miyasato S.R."/>
            <person name="Simison M."/>
            <person name="Cherry J.M."/>
        </authorList>
    </citation>
    <scope>GENOME REANNOTATION</scope>
    <source>
        <strain>ATCC 204508 / S288c</strain>
    </source>
</reference>
<reference key="3">
    <citation type="journal article" date="2003" name="Genome Biol.">
        <title>Reinvestigation of the Saccharomyces cerevisiae genome annotation by comparison to the genome of a related fungus: Ashbya gossypii.</title>
        <authorList>
            <person name="Brachat S."/>
            <person name="Dietrich F.S."/>
            <person name="Voegeli S."/>
            <person name="Zhang Z."/>
            <person name="Stuart L."/>
            <person name="Lerch A."/>
            <person name="Gates K."/>
            <person name="Gaffney T.D."/>
            <person name="Philippsen P."/>
        </authorList>
    </citation>
    <scope>NUCLEOTIDE SEQUENCE [MRNA] OF 1-310</scope>
    <source>
        <strain>ATCC 204511 / S288c / AB972</strain>
    </source>
</reference>
<reference key="4">
    <citation type="journal article" date="2003" name="Nature">
        <title>Global analysis of protein localization in budding yeast.</title>
        <authorList>
            <person name="Huh W.-K."/>
            <person name="Falvo J.V."/>
            <person name="Gerke L.C."/>
            <person name="Carroll A.S."/>
            <person name="Howson R.W."/>
            <person name="Weissman J.S."/>
            <person name="O'Shea E.K."/>
        </authorList>
    </citation>
    <scope>SUBCELLULAR LOCATION [LARGE SCALE ANALYSIS]</scope>
</reference>
<reference key="5">
    <citation type="journal article" date="2006" name="Proc. Natl. Acad. Sci. U.S.A.">
        <title>A global topology map of the Saccharomyces cerevisiae membrane proteome.</title>
        <authorList>
            <person name="Kim H."/>
            <person name="Melen K."/>
            <person name="Oesterberg M."/>
            <person name="von Heijne G."/>
        </authorList>
    </citation>
    <scope>TOPOLOGY [LARGE SCALE ANALYSIS]</scope>
    <source>
        <strain>ATCC 208353 / W303-1A</strain>
    </source>
</reference>
<reference key="6">
    <citation type="journal article" date="2009" name="Genetics">
        <title>Genetic identification of factors that modulate ribosomal DNA transcription in Saccharomyces cerevisiae.</title>
        <authorList>
            <person name="Hontz R.D."/>
            <person name="Niederer R.O."/>
            <person name="Johnson J.M."/>
            <person name="Smith J.S."/>
        </authorList>
    </citation>
    <scope>FUNCTION</scope>
</reference>
<reference key="7">
    <citation type="journal article" date="2013" name="PLoS Genet.">
        <title>A highly redundant gene network controls assembly of the outer spore wall in S. cerevisiae.</title>
        <authorList>
            <person name="Lin C.P."/>
            <person name="Kim C."/>
            <person name="Smith S.O."/>
            <person name="Neiman A.M."/>
        </authorList>
    </citation>
    <scope>FUNCTION</scope>
    <scope>SUBCELLULAR LOCATION</scope>
    <scope>DISRUPTION PHENOTYPE</scope>
</reference>
<feature type="chain" id="PRO_0000203488" description="Outer spore wall protein RRT8">
    <location>
        <begin position="1"/>
        <end position="342"/>
    </location>
</feature>
<feature type="topological domain" description="Cytoplasmic" evidence="8">
    <location>
        <begin position="1"/>
        <end position="109"/>
    </location>
</feature>
<feature type="transmembrane region" description="Helical" evidence="1">
    <location>
        <begin position="110"/>
        <end position="130"/>
    </location>
</feature>
<feature type="topological domain" description="Extracellular" evidence="8">
    <location>
        <position position="131"/>
    </location>
</feature>
<feature type="transmembrane region" description="Helical" evidence="1">
    <location>
        <begin position="132"/>
        <end position="152"/>
    </location>
</feature>
<feature type="topological domain" description="Cytoplasmic" evidence="8">
    <location>
        <begin position="153"/>
        <end position="240"/>
    </location>
</feature>
<feature type="transmembrane region" description="Helical" evidence="1">
    <location>
        <begin position="241"/>
        <end position="261"/>
    </location>
</feature>
<feature type="topological domain" description="Extracellular" evidence="8">
    <location>
        <begin position="262"/>
        <end position="299"/>
    </location>
</feature>
<feature type="transmembrane region" description="Helical" evidence="1">
    <location>
        <begin position="300"/>
        <end position="320"/>
    </location>
</feature>
<feature type="topological domain" description="Cytoplasmic" evidence="3">
    <location>
        <begin position="321"/>
        <end position="342"/>
    </location>
</feature>
<feature type="sequence conflict" description="In Ref. 3; AAP04341." evidence="7" ref="3">
    <original>T</original>
    <variation>A</variation>
    <location>
        <position position="138"/>
    </location>
</feature>